<reference key="1">
    <citation type="journal article" date="1999" name="J. Virol.">
        <title>EBP2, a human protein that interacts with sequences of the Epstein-Barr virus nuclear antigen 1 important for plasmid maintenance.</title>
        <authorList>
            <person name="Shire K."/>
            <person name="Ceccarelli D.F.J."/>
            <person name="Avolio-Hunter T.M."/>
            <person name="Frappier L."/>
        </authorList>
    </citation>
    <scope>NUCLEOTIDE SEQUENCE [MRNA]</scope>
    <scope>INTERACTION WITH EBNA1</scope>
</reference>
<reference key="2">
    <citation type="journal article" date="2001" name="Biochem. Biophys. Res. Commun.">
        <title>Expression of p40/Epstein-Barr virus nuclear antigen 1 binding protein 2.</title>
        <authorList>
            <person name="Henning D."/>
            <person name="Valdez B.C."/>
        </authorList>
    </citation>
    <scope>NUCLEOTIDE SEQUENCE [MRNA]</scope>
    <scope>TISSUE SPECIFICITY</scope>
</reference>
<reference key="3">
    <citation type="journal article" date="2004" name="Genome Res.">
        <title>The status, quality, and expansion of the NIH full-length cDNA project: the Mammalian Gene Collection (MGC).</title>
        <authorList>
            <consortium name="The MGC Project Team"/>
        </authorList>
    </citation>
    <scope>NUCLEOTIDE SEQUENCE [LARGE SCALE MRNA]</scope>
    <source>
        <tissue>Skin</tissue>
    </source>
</reference>
<reference key="4">
    <citation type="journal article" date="1987" name="Cancer Res.">
        <title>Identification and partial characterization of a Mr 40,000 nucleolar antigen associated with cell proliferation.</title>
        <authorList>
            <person name="Chatterjee A."/>
            <person name="Freeman J.W."/>
            <person name="Busch H."/>
        </authorList>
    </citation>
    <scope>SUBCELLULAR LOCATION</scope>
</reference>
<reference key="5">
    <citation type="journal article" date="2006" name="Cell">
        <title>Global, in vivo, and site-specific phosphorylation dynamics in signaling networks.</title>
        <authorList>
            <person name="Olsen J.V."/>
            <person name="Blagoev B."/>
            <person name="Gnad F."/>
            <person name="Macek B."/>
            <person name="Kumar C."/>
            <person name="Mortensen P."/>
            <person name="Mann M."/>
        </authorList>
    </citation>
    <scope>PHOSPHORYLATION [LARGE SCALE ANALYSIS] AT SER-16</scope>
    <scope>IDENTIFICATION BY MASS SPECTROMETRY [LARGE SCALE ANALYSIS]</scope>
    <source>
        <tissue>Cervix carcinoma</tissue>
    </source>
</reference>
<reference key="6">
    <citation type="journal article" date="2008" name="Proc. Natl. Acad. Sci. U.S.A.">
        <title>A quantitative atlas of mitotic phosphorylation.</title>
        <authorList>
            <person name="Dephoure N."/>
            <person name="Zhou C."/>
            <person name="Villen J."/>
            <person name="Beausoleil S.A."/>
            <person name="Bakalarski C.E."/>
            <person name="Elledge S.J."/>
            <person name="Gygi S.P."/>
        </authorList>
    </citation>
    <scope>PHOSPHORYLATION [LARGE SCALE ANALYSIS] AT SER-270</scope>
    <scope>IDENTIFICATION BY MASS SPECTROMETRY [LARGE SCALE ANALYSIS]</scope>
    <source>
        <tissue>Cervix carcinoma</tissue>
    </source>
</reference>
<reference key="7">
    <citation type="journal article" date="2009" name="Genes Cells">
        <title>Proteomic and targeted analytical identification of BXDC1 and EBNA1BP2 as dynamic scaffold proteins in the nucleolus.</title>
        <authorList>
            <person name="Hirano Y."/>
            <person name="Ishii K."/>
            <person name="Kumeta M."/>
            <person name="Furukawa K."/>
            <person name="Takeyasu K."/>
            <person name="Horigome T."/>
        </authorList>
    </citation>
    <scope>SUBCELLULAR LOCATION</scope>
</reference>
<reference key="8">
    <citation type="journal article" date="2010" name="Sci. Signal.">
        <title>Quantitative phosphoproteomics reveals widespread full phosphorylation site occupancy during mitosis.</title>
        <authorList>
            <person name="Olsen J.V."/>
            <person name="Vermeulen M."/>
            <person name="Santamaria A."/>
            <person name="Kumar C."/>
            <person name="Miller M.L."/>
            <person name="Jensen L.J."/>
            <person name="Gnad F."/>
            <person name="Cox J."/>
            <person name="Jensen T.S."/>
            <person name="Nigg E.A."/>
            <person name="Brunak S."/>
            <person name="Mann M."/>
        </authorList>
    </citation>
    <scope>ACETYLATION [LARGE SCALE ANALYSIS] AT MET-1</scope>
    <scope>PHOSPHORYLATION [LARGE SCALE ANALYSIS] AT THR-3; SER-7; SER-9; SER-11; SER-13 AND SER-16</scope>
    <scope>IDENTIFICATION BY MASS SPECTROMETRY [LARGE SCALE ANALYSIS]</scope>
    <source>
        <tissue>Cervix carcinoma</tissue>
    </source>
</reference>
<reference key="9">
    <citation type="journal article" date="2011" name="BMC Syst. Biol.">
        <title>Initial characterization of the human central proteome.</title>
        <authorList>
            <person name="Burkard T.R."/>
            <person name="Planyavsky M."/>
            <person name="Kaupe I."/>
            <person name="Breitwieser F.P."/>
            <person name="Buerckstuemmer T."/>
            <person name="Bennett K.L."/>
            <person name="Superti-Furga G."/>
            <person name="Colinge J."/>
        </authorList>
    </citation>
    <scope>IDENTIFICATION BY MASS SPECTROMETRY [LARGE SCALE ANALYSIS]</scope>
</reference>
<reference key="10">
    <citation type="journal article" date="2012" name="Proc. Natl. Acad. Sci. U.S.A.">
        <title>N-terminal acetylome analyses and functional insights of the N-terminal acetyltransferase NatB.</title>
        <authorList>
            <person name="Van Damme P."/>
            <person name="Lasa M."/>
            <person name="Polevoda B."/>
            <person name="Gazquez C."/>
            <person name="Elosegui-Artola A."/>
            <person name="Kim D.S."/>
            <person name="De Juan-Pardo E."/>
            <person name="Demeyer K."/>
            <person name="Hole K."/>
            <person name="Larrea E."/>
            <person name="Timmerman E."/>
            <person name="Prieto J."/>
            <person name="Arnesen T."/>
            <person name="Sherman F."/>
            <person name="Gevaert K."/>
            <person name="Aldabe R."/>
        </authorList>
    </citation>
    <scope>ACETYLATION [LARGE SCALE ANALYSIS] AT MET-1</scope>
    <scope>IDENTIFICATION BY MASS SPECTROMETRY [LARGE SCALE ANALYSIS]</scope>
</reference>
<reference key="11">
    <citation type="journal article" date="2013" name="Genes Cells">
        <title>Nucleolar scaffold protein, WDR46, determines the granular compartmental localization of nucleolin and DDX21.</title>
        <authorList>
            <person name="Hirai Y."/>
            <person name="Louvet E."/>
            <person name="Oda T."/>
            <person name="Kumeta M."/>
            <person name="Watanabe Y."/>
            <person name="Horigome T."/>
            <person name="Takeyasu K."/>
        </authorList>
    </citation>
    <scope>INTERACTION WITH WDR46</scope>
</reference>
<reference key="12">
    <citation type="journal article" date="2013" name="J. Proteome Res.">
        <title>Toward a comprehensive characterization of a human cancer cell phosphoproteome.</title>
        <authorList>
            <person name="Zhou H."/>
            <person name="Di Palma S."/>
            <person name="Preisinger C."/>
            <person name="Peng M."/>
            <person name="Polat A.N."/>
            <person name="Heck A.J."/>
            <person name="Mohammed S."/>
        </authorList>
    </citation>
    <scope>PHOSPHORYLATION [LARGE SCALE ANALYSIS] AT SER-264 AND SER-270</scope>
    <scope>IDENTIFICATION BY MASS SPECTROMETRY [LARGE SCALE ANALYSIS]</scope>
    <source>
        <tissue>Cervix carcinoma</tissue>
        <tissue>Erythroleukemia</tissue>
    </source>
</reference>
<reference key="13">
    <citation type="journal article" date="2014" name="J. Proteomics">
        <title>An enzyme assisted RP-RPLC approach for in-depth analysis of human liver phosphoproteome.</title>
        <authorList>
            <person name="Bian Y."/>
            <person name="Song C."/>
            <person name="Cheng K."/>
            <person name="Dong M."/>
            <person name="Wang F."/>
            <person name="Huang J."/>
            <person name="Sun D."/>
            <person name="Wang L."/>
            <person name="Ye M."/>
            <person name="Zou H."/>
        </authorList>
    </citation>
    <scope>IDENTIFICATION BY MASS SPECTROMETRY [LARGE SCALE ANALYSIS]</scope>
    <source>
        <tissue>Liver</tissue>
    </source>
</reference>
<reference key="14">
    <citation type="journal article" date="2017" name="Nat. Struct. Mol. Biol.">
        <title>Site-specific mapping of the human SUMO proteome reveals co-modification with phosphorylation.</title>
        <authorList>
            <person name="Hendriks I.A."/>
            <person name="Lyon D."/>
            <person name="Young C."/>
            <person name="Jensen L.J."/>
            <person name="Vertegaal A.C."/>
            <person name="Nielsen M.L."/>
        </authorList>
    </citation>
    <scope>SUMOYLATION [LARGE SCALE ANALYSIS] AT LYS-94; LYS-179 AND LYS-218</scope>
    <scope>IDENTIFICATION BY MASS SPECTROMETRY [LARGE SCALE ANALYSIS]</scope>
</reference>
<accession>Q99848</accession>
<accession>Q96A66</accession>
<feature type="chain" id="PRO_0000119993" description="Probable rRNA-processing protein EBP2">
    <location>
        <begin position="1"/>
        <end position="306"/>
    </location>
</feature>
<feature type="region of interest" description="Disordered" evidence="3">
    <location>
        <begin position="1"/>
        <end position="20"/>
    </location>
</feature>
<feature type="region of interest" description="Disordered" evidence="3">
    <location>
        <begin position="77"/>
        <end position="99"/>
    </location>
</feature>
<feature type="region of interest" description="Disordered" evidence="3">
    <location>
        <begin position="213"/>
        <end position="306"/>
    </location>
</feature>
<feature type="coiled-coil region" evidence="2">
    <location>
        <begin position="138"/>
        <end position="169"/>
    </location>
</feature>
<feature type="compositionally biased region" description="Basic residues" evidence="3">
    <location>
        <begin position="274"/>
        <end position="306"/>
    </location>
</feature>
<feature type="modified residue" description="N-acetylmethionine" evidence="12 13">
    <location>
        <position position="1"/>
    </location>
</feature>
<feature type="modified residue" description="Phosphothreonine" evidence="12">
    <location>
        <position position="3"/>
    </location>
</feature>
<feature type="modified residue" description="Phosphoserine" evidence="12">
    <location>
        <position position="7"/>
    </location>
</feature>
<feature type="modified residue" description="Phosphoserine" evidence="12">
    <location>
        <position position="9"/>
    </location>
</feature>
<feature type="modified residue" description="Phosphoserine" evidence="12">
    <location>
        <position position="11"/>
    </location>
</feature>
<feature type="modified residue" description="Phosphoserine" evidence="12">
    <location>
        <position position="13"/>
    </location>
</feature>
<feature type="modified residue" description="Phosphoserine" evidence="10 12">
    <location>
        <position position="16"/>
    </location>
</feature>
<feature type="modified residue" description="Phosphoserine" evidence="14">
    <location>
        <position position="264"/>
    </location>
</feature>
<feature type="modified residue" description="Phosphoserine" evidence="11 14">
    <location>
        <position position="270"/>
    </location>
</feature>
<feature type="cross-link" description="Glycyl lysine isopeptide (Lys-Gly) (interchain with G-Cter in SUMO2)" evidence="15">
    <location>
        <position position="94"/>
    </location>
</feature>
<feature type="cross-link" description="Glycyl lysine isopeptide (Lys-Gly) (interchain with G-Cter in SUMO2)" evidence="15">
    <location>
        <position position="179"/>
    </location>
</feature>
<feature type="cross-link" description="Glycyl lysine isopeptide (Lys-Gly) (interchain with G-Cter in SUMO2)" evidence="15">
    <location>
        <position position="218"/>
    </location>
</feature>
<feature type="sequence variant" id="VAR_024437" description="In dbSNP:rs7163.">
    <original>R</original>
    <variation>H</variation>
    <location>
        <position position="223"/>
    </location>
</feature>
<feature type="sequence conflict" description="In Ref. 2; AAB46731." evidence="9" ref="2">
    <original>M</original>
    <variation>V</variation>
    <location>
        <position position="147"/>
    </location>
</feature>
<proteinExistence type="evidence at protein level"/>
<organism>
    <name type="scientific">Homo sapiens</name>
    <name type="common">Human</name>
    <dbReference type="NCBI Taxonomy" id="9606"/>
    <lineage>
        <taxon>Eukaryota</taxon>
        <taxon>Metazoa</taxon>
        <taxon>Chordata</taxon>
        <taxon>Craniata</taxon>
        <taxon>Vertebrata</taxon>
        <taxon>Euteleostomi</taxon>
        <taxon>Mammalia</taxon>
        <taxon>Eutheria</taxon>
        <taxon>Euarchontoglires</taxon>
        <taxon>Primates</taxon>
        <taxon>Haplorrhini</taxon>
        <taxon>Catarrhini</taxon>
        <taxon>Hominidae</taxon>
        <taxon>Homo</taxon>
    </lineage>
</organism>
<evidence type="ECO:0000250" key="1"/>
<evidence type="ECO:0000255" key="2"/>
<evidence type="ECO:0000256" key="3">
    <source>
        <dbReference type="SAM" id="MobiDB-lite"/>
    </source>
</evidence>
<evidence type="ECO:0000269" key="4">
    <source>
    </source>
</evidence>
<evidence type="ECO:0000269" key="5">
    <source>
    </source>
</evidence>
<evidence type="ECO:0000269" key="6">
    <source>
    </source>
</evidence>
<evidence type="ECO:0000269" key="7">
    <source>
    </source>
</evidence>
<evidence type="ECO:0000269" key="8">
    <source>
    </source>
</evidence>
<evidence type="ECO:0000305" key="9"/>
<evidence type="ECO:0007744" key="10">
    <source>
    </source>
</evidence>
<evidence type="ECO:0007744" key="11">
    <source>
    </source>
</evidence>
<evidence type="ECO:0007744" key="12">
    <source>
    </source>
</evidence>
<evidence type="ECO:0007744" key="13">
    <source>
    </source>
</evidence>
<evidence type="ECO:0007744" key="14">
    <source>
    </source>
</evidence>
<evidence type="ECO:0007744" key="15">
    <source>
    </source>
</evidence>
<sequence length="306" mass="34852">MDTPPLSDSESESDESLVTDRELQDAFSRGLLKPGLNVVLEGPKKAVNDVNGLKQCLAEFKRDLEWVERLDVTLGPVPEIGGSEAPAPQNKDQKAVDPEDDFQREMSFYRQAQAAVLAVLPRLHQLKVPTKRPTDYFAEMAKSDLQMQKIRQKLQTKQAAMERSEKAKQLRALRKYGKKVQTEVLQKRQQEKAHMMNAIKKYQKGFSDKLDFLEGDQKPLAQRKKAGAKGQQMRKGPSAKRRYKNQKFGFGGKKKGSKWNTRESYDDVSSFRAKTAHGRGLKRPGKKGSNKRPGKRTREKMKNRTH</sequence>
<name>EBP2_HUMAN</name>
<gene>
    <name type="primary">EBNA1BP2</name>
    <name type="synonym">EBP2</name>
</gene>
<protein>
    <recommendedName>
        <fullName>Probable rRNA-processing protein EBP2</fullName>
    </recommendedName>
    <alternativeName>
        <fullName>EBNA1-binding protein 2</fullName>
    </alternativeName>
    <alternativeName>
        <fullName>Nucleolar protein p40</fullName>
    </alternativeName>
</protein>
<comment type="function">
    <text evidence="1">Required for the processing of the 27S pre-rRNA.</text>
</comment>
<comment type="subunit">
    <text evidence="4 7">Specifically interacts with EBV EBNA1. The EBNA1-EBP2 interaction is important for the stable segregation of EBV episomes during cell division (PubMed:10074103). Interacts with WDR46.</text>
</comment>
<comment type="interaction">
    <interactant intactId="EBI-1048111">
        <id>Q99848</id>
    </interactant>
    <interactant intactId="EBI-1052326">
        <id>Q8TDN6</id>
        <label>BRIX1</label>
    </interactant>
    <organismsDiffer>false</organismsDiffer>
    <experiments>6</experiments>
</comment>
<comment type="interaction">
    <interactant intactId="EBI-1048111">
        <id>Q99848</id>
    </interactant>
    <interactant intactId="EBI-739624">
        <id>Q8NHQ1</id>
        <label>CEP70</label>
    </interactant>
    <organismsDiffer>false</organismsDiffer>
    <experiments>3</experiments>
</comment>
<comment type="interaction">
    <interactant intactId="EBI-1048111">
        <id>Q99848</id>
    </interactant>
    <interactant intactId="EBI-10175124">
        <id>Q8IZU0</id>
        <label>FAM9B</label>
    </interactant>
    <organismsDiffer>false</organismsDiffer>
    <experiments>5</experiments>
</comment>
<comment type="subcellular location">
    <subcellularLocation>
        <location evidence="6 8">Nucleus</location>
        <location evidence="6 8">Nucleolus</location>
    </subcellularLocation>
    <text>Associated with the nucleolus in an RNA-dependent manner.</text>
</comment>
<comment type="tissue specificity">
    <text evidence="5">Ubiquitous.</text>
</comment>
<comment type="similarity">
    <text evidence="9">Belongs to the EBP2 family.</text>
</comment>
<keyword id="KW-0002">3D-structure</keyword>
<keyword id="KW-0007">Acetylation</keyword>
<keyword id="KW-0175">Coiled coil</keyword>
<keyword id="KW-1017">Isopeptide bond</keyword>
<keyword id="KW-0539">Nucleus</keyword>
<keyword id="KW-0597">Phosphoprotein</keyword>
<keyword id="KW-1267">Proteomics identification</keyword>
<keyword id="KW-1185">Reference proteome</keyword>
<keyword id="KW-0690">Ribosome biogenesis</keyword>
<keyword id="KW-0832">Ubl conjugation</keyword>
<dbReference type="EMBL" id="U86602">
    <property type="protein sequence ID" value="AAB46731.1"/>
    <property type="molecule type" value="mRNA"/>
</dbReference>
<dbReference type="EMBL" id="BC009175">
    <property type="protein sequence ID" value="AAH09175.1"/>
    <property type="molecule type" value="mRNA"/>
</dbReference>
<dbReference type="CCDS" id="CCDS478.1"/>
<dbReference type="PIR" id="JC7687">
    <property type="entry name" value="JC7687"/>
</dbReference>
<dbReference type="RefSeq" id="NP_001153408.1">
    <property type="nucleotide sequence ID" value="NM_001159936.1"/>
</dbReference>
<dbReference type="RefSeq" id="NP_006815.2">
    <property type="nucleotide sequence ID" value="NM_006824.3"/>
</dbReference>
<dbReference type="RefSeq" id="XP_047297445.1">
    <property type="nucleotide sequence ID" value="XM_047441489.1"/>
</dbReference>
<dbReference type="PDB" id="8FKP">
    <property type="method" value="EM"/>
    <property type="resolution" value="2.85 A"/>
    <property type="chains" value="SN=1-306"/>
</dbReference>
<dbReference type="PDB" id="8FKQ">
    <property type="method" value="EM"/>
    <property type="resolution" value="2.76 A"/>
    <property type="chains" value="SN=1-306"/>
</dbReference>
<dbReference type="PDB" id="8FKR">
    <property type="method" value="EM"/>
    <property type="resolution" value="2.89 A"/>
    <property type="chains" value="SN=1-306"/>
</dbReference>
<dbReference type="PDB" id="8FKS">
    <property type="method" value="EM"/>
    <property type="resolution" value="2.88 A"/>
    <property type="chains" value="SN=1-306"/>
</dbReference>
<dbReference type="PDB" id="8FKT">
    <property type="method" value="EM"/>
    <property type="resolution" value="2.81 A"/>
    <property type="chains" value="SN=1-306"/>
</dbReference>
<dbReference type="PDB" id="8FKU">
    <property type="method" value="EM"/>
    <property type="resolution" value="2.82 A"/>
    <property type="chains" value="SN=1-306"/>
</dbReference>
<dbReference type="PDB" id="8FKV">
    <property type="method" value="EM"/>
    <property type="resolution" value="2.47 A"/>
    <property type="chains" value="SN=1-306"/>
</dbReference>
<dbReference type="PDB" id="8FKW">
    <property type="method" value="EM"/>
    <property type="resolution" value="2.50 A"/>
    <property type="chains" value="SN=1-306"/>
</dbReference>
<dbReference type="PDB" id="8FKX">
    <property type="method" value="EM"/>
    <property type="resolution" value="2.59 A"/>
    <property type="chains" value="SN=1-306"/>
</dbReference>
<dbReference type="PDB" id="8FKY">
    <property type="method" value="EM"/>
    <property type="resolution" value="2.67 A"/>
    <property type="chains" value="SN=1-306"/>
</dbReference>
<dbReference type="PDBsum" id="8FKP"/>
<dbReference type="PDBsum" id="8FKQ"/>
<dbReference type="PDBsum" id="8FKR"/>
<dbReference type="PDBsum" id="8FKS"/>
<dbReference type="PDBsum" id="8FKT"/>
<dbReference type="PDBsum" id="8FKU"/>
<dbReference type="PDBsum" id="8FKV"/>
<dbReference type="PDBsum" id="8FKW"/>
<dbReference type="PDBsum" id="8FKX"/>
<dbReference type="PDBsum" id="8FKY"/>
<dbReference type="EMDB" id="EMD-29252"/>
<dbReference type="EMDB" id="EMD-29253"/>
<dbReference type="EMDB" id="EMD-29254"/>
<dbReference type="EMDB" id="EMD-29255"/>
<dbReference type="EMDB" id="EMD-29256"/>
<dbReference type="EMDB" id="EMD-29257"/>
<dbReference type="EMDB" id="EMD-29258"/>
<dbReference type="EMDB" id="EMD-29259"/>
<dbReference type="EMDB" id="EMD-29260"/>
<dbReference type="EMDB" id="EMD-29261"/>
<dbReference type="SMR" id="Q99848"/>
<dbReference type="BioGRID" id="116166">
    <property type="interactions" value="333"/>
</dbReference>
<dbReference type="CORUM" id="Q99848"/>
<dbReference type="FunCoup" id="Q99848">
    <property type="interactions" value="1830"/>
</dbReference>
<dbReference type="IntAct" id="Q99848">
    <property type="interactions" value="173"/>
</dbReference>
<dbReference type="MINT" id="Q99848"/>
<dbReference type="STRING" id="9606.ENSP00000407323"/>
<dbReference type="GlyGen" id="Q99848">
    <property type="glycosylation" value="1 site, 1 O-linked glycan (1 site)"/>
</dbReference>
<dbReference type="iPTMnet" id="Q99848"/>
<dbReference type="PhosphoSitePlus" id="Q99848"/>
<dbReference type="SwissPalm" id="Q99848"/>
<dbReference type="BioMuta" id="EBNA1BP2"/>
<dbReference type="DMDM" id="116241344"/>
<dbReference type="jPOST" id="Q99848"/>
<dbReference type="MassIVE" id="Q99848"/>
<dbReference type="PaxDb" id="9606-ENSP00000407323"/>
<dbReference type="PeptideAtlas" id="Q99848"/>
<dbReference type="ProteomicsDB" id="78504"/>
<dbReference type="Pumba" id="Q99848"/>
<dbReference type="Antibodypedia" id="18196">
    <property type="antibodies" value="131 antibodies from 27 providers"/>
</dbReference>
<dbReference type="DNASU" id="10969"/>
<dbReference type="Ensembl" id="ENST00000236051.3">
    <property type="protein sequence ID" value="ENSP00000236051.2"/>
    <property type="gene ID" value="ENSG00000117395.13"/>
</dbReference>
<dbReference type="GeneID" id="10969"/>
<dbReference type="KEGG" id="hsa:10969"/>
<dbReference type="MANE-Select" id="ENST00000236051.3">
    <property type="protein sequence ID" value="ENSP00000236051.2"/>
    <property type="RefSeq nucleotide sequence ID" value="NM_006824.3"/>
    <property type="RefSeq protein sequence ID" value="NP_006815.2"/>
</dbReference>
<dbReference type="UCSC" id="uc001cin.4">
    <property type="organism name" value="human"/>
</dbReference>
<dbReference type="AGR" id="HGNC:15531"/>
<dbReference type="CTD" id="10969"/>
<dbReference type="DisGeNET" id="10969"/>
<dbReference type="GeneCards" id="EBNA1BP2"/>
<dbReference type="HGNC" id="HGNC:15531">
    <property type="gene designation" value="EBNA1BP2"/>
</dbReference>
<dbReference type="HPA" id="ENSG00000117395">
    <property type="expression patterns" value="Low tissue specificity"/>
</dbReference>
<dbReference type="MIM" id="614443">
    <property type="type" value="gene"/>
</dbReference>
<dbReference type="neXtProt" id="NX_Q99848"/>
<dbReference type="OpenTargets" id="ENSG00000117395"/>
<dbReference type="PharmGKB" id="PA27586"/>
<dbReference type="VEuPathDB" id="HostDB:ENSG00000117395"/>
<dbReference type="eggNOG" id="KOG3080">
    <property type="taxonomic scope" value="Eukaryota"/>
</dbReference>
<dbReference type="GeneTree" id="ENSGT00390000014984"/>
<dbReference type="HOGENOM" id="CLU_036007_1_0_1"/>
<dbReference type="InParanoid" id="Q99848"/>
<dbReference type="OrthoDB" id="443772at2759"/>
<dbReference type="PAN-GO" id="Q99848">
    <property type="GO annotations" value="5 GO annotations based on evolutionary models"/>
</dbReference>
<dbReference type="PhylomeDB" id="Q99848"/>
<dbReference type="PathwayCommons" id="Q99848"/>
<dbReference type="Reactome" id="R-HSA-6791226">
    <property type="pathway name" value="Major pathway of rRNA processing in the nucleolus and cytosol"/>
</dbReference>
<dbReference type="SignaLink" id="Q99848"/>
<dbReference type="BioGRID-ORCS" id="10969">
    <property type="hits" value="633 hits in 1164 CRISPR screens"/>
</dbReference>
<dbReference type="CD-CODE" id="91857CE7">
    <property type="entry name" value="Nucleolus"/>
</dbReference>
<dbReference type="ChiTaRS" id="EBNA1BP2">
    <property type="organism name" value="human"/>
</dbReference>
<dbReference type="GeneWiki" id="EBNA1BP2"/>
<dbReference type="GenomeRNAi" id="10969"/>
<dbReference type="Pharos" id="Q99848">
    <property type="development level" value="Tbio"/>
</dbReference>
<dbReference type="PRO" id="PR:Q99848"/>
<dbReference type="Proteomes" id="UP000005640">
    <property type="component" value="Chromosome 1"/>
</dbReference>
<dbReference type="RNAct" id="Q99848">
    <property type="molecule type" value="protein"/>
</dbReference>
<dbReference type="Bgee" id="ENSG00000117395">
    <property type="expression patterns" value="Expressed in right lobe of liver and 204 other cell types or tissues"/>
</dbReference>
<dbReference type="ExpressionAtlas" id="Q99848">
    <property type="expression patterns" value="baseline and differential"/>
</dbReference>
<dbReference type="GO" id="GO:0005694">
    <property type="term" value="C:chromosome"/>
    <property type="evidence" value="ECO:0000314"/>
    <property type="project" value="HPA"/>
</dbReference>
<dbReference type="GO" id="GO:0034399">
    <property type="term" value="C:nuclear periphery"/>
    <property type="evidence" value="ECO:0000318"/>
    <property type="project" value="GO_Central"/>
</dbReference>
<dbReference type="GO" id="GO:0005730">
    <property type="term" value="C:nucleolus"/>
    <property type="evidence" value="ECO:0000314"/>
    <property type="project" value="UniProtKB"/>
</dbReference>
<dbReference type="GO" id="GO:0030687">
    <property type="term" value="C:preribosome, large subunit precursor"/>
    <property type="evidence" value="ECO:0000318"/>
    <property type="project" value="GO_Central"/>
</dbReference>
<dbReference type="GO" id="GO:0003723">
    <property type="term" value="F:RNA binding"/>
    <property type="evidence" value="ECO:0007005"/>
    <property type="project" value="UniProtKB"/>
</dbReference>
<dbReference type="GO" id="GO:0042273">
    <property type="term" value="P:ribosomal large subunit biogenesis"/>
    <property type="evidence" value="ECO:0000318"/>
    <property type="project" value="GO_Central"/>
</dbReference>
<dbReference type="GO" id="GO:0006364">
    <property type="term" value="P:rRNA processing"/>
    <property type="evidence" value="ECO:0000318"/>
    <property type="project" value="GO_Central"/>
</dbReference>
<dbReference type="InterPro" id="IPR008610">
    <property type="entry name" value="Ebp2"/>
</dbReference>
<dbReference type="PANTHER" id="PTHR13028">
    <property type="entry name" value="RRNA PROCESSING PROTEIN EBNA1-BINDING PROTEIN-RELATED"/>
    <property type="match status" value="1"/>
</dbReference>
<dbReference type="PANTHER" id="PTHR13028:SF0">
    <property type="entry name" value="RRNA-PROCESSING PROTEIN EBP2-RELATED"/>
    <property type="match status" value="1"/>
</dbReference>
<dbReference type="Pfam" id="PF05890">
    <property type="entry name" value="Ebp2"/>
    <property type="match status" value="1"/>
</dbReference>